<proteinExistence type="inferred from homology"/>
<feature type="chain" id="PRO_1000129054" description="Peptidase T">
    <location>
        <begin position="1"/>
        <end position="407"/>
    </location>
</feature>
<feature type="active site" evidence="1">
    <location>
        <position position="83"/>
    </location>
</feature>
<feature type="active site" description="Proton acceptor" evidence="1">
    <location>
        <position position="176"/>
    </location>
</feature>
<feature type="binding site" evidence="1">
    <location>
        <position position="81"/>
    </location>
    <ligand>
        <name>Zn(2+)</name>
        <dbReference type="ChEBI" id="CHEBI:29105"/>
        <label>1</label>
    </ligand>
</feature>
<feature type="binding site" evidence="1">
    <location>
        <position position="142"/>
    </location>
    <ligand>
        <name>Zn(2+)</name>
        <dbReference type="ChEBI" id="CHEBI:29105"/>
        <label>1</label>
    </ligand>
</feature>
<feature type="binding site" evidence="1">
    <location>
        <position position="142"/>
    </location>
    <ligand>
        <name>Zn(2+)</name>
        <dbReference type="ChEBI" id="CHEBI:29105"/>
        <label>2</label>
    </ligand>
</feature>
<feature type="binding site" evidence="1">
    <location>
        <position position="177"/>
    </location>
    <ligand>
        <name>Zn(2+)</name>
        <dbReference type="ChEBI" id="CHEBI:29105"/>
        <label>2</label>
    </ligand>
</feature>
<feature type="binding site" evidence="1">
    <location>
        <position position="199"/>
    </location>
    <ligand>
        <name>Zn(2+)</name>
        <dbReference type="ChEBI" id="CHEBI:29105"/>
        <label>1</label>
    </ligand>
</feature>
<feature type="binding site" evidence="1">
    <location>
        <position position="381"/>
    </location>
    <ligand>
        <name>Zn(2+)</name>
        <dbReference type="ChEBI" id="CHEBI:29105"/>
        <label>2</label>
    </ligand>
</feature>
<dbReference type="EC" id="3.4.11.4" evidence="1"/>
<dbReference type="EMBL" id="CP000936">
    <property type="protein sequence ID" value="ACA37334.1"/>
    <property type="molecule type" value="Genomic_DNA"/>
</dbReference>
<dbReference type="RefSeq" id="WP_000222058.1">
    <property type="nucleotide sequence ID" value="NC_010380.1"/>
</dbReference>
<dbReference type="SMR" id="B1IBG7"/>
<dbReference type="MEROPS" id="M20.003"/>
<dbReference type="GeneID" id="45218301"/>
<dbReference type="KEGG" id="spv:SPH_1110"/>
<dbReference type="HOGENOM" id="CLU_053676_0_0_9"/>
<dbReference type="Proteomes" id="UP000002163">
    <property type="component" value="Chromosome"/>
</dbReference>
<dbReference type="GO" id="GO:0005829">
    <property type="term" value="C:cytosol"/>
    <property type="evidence" value="ECO:0007669"/>
    <property type="project" value="TreeGrafter"/>
</dbReference>
<dbReference type="GO" id="GO:0008237">
    <property type="term" value="F:metallopeptidase activity"/>
    <property type="evidence" value="ECO:0007669"/>
    <property type="project" value="UniProtKB-KW"/>
</dbReference>
<dbReference type="GO" id="GO:0045148">
    <property type="term" value="F:tripeptide aminopeptidase activity"/>
    <property type="evidence" value="ECO:0007669"/>
    <property type="project" value="UniProtKB-UniRule"/>
</dbReference>
<dbReference type="GO" id="GO:0008270">
    <property type="term" value="F:zinc ion binding"/>
    <property type="evidence" value="ECO:0007669"/>
    <property type="project" value="UniProtKB-UniRule"/>
</dbReference>
<dbReference type="GO" id="GO:0043171">
    <property type="term" value="P:peptide catabolic process"/>
    <property type="evidence" value="ECO:0007669"/>
    <property type="project" value="UniProtKB-UniRule"/>
</dbReference>
<dbReference type="GO" id="GO:0006508">
    <property type="term" value="P:proteolysis"/>
    <property type="evidence" value="ECO:0007669"/>
    <property type="project" value="UniProtKB-UniRule"/>
</dbReference>
<dbReference type="CDD" id="cd03892">
    <property type="entry name" value="M20_peptT"/>
    <property type="match status" value="1"/>
</dbReference>
<dbReference type="FunFam" id="3.30.70.360:FF:000002">
    <property type="entry name" value="Peptidase T"/>
    <property type="match status" value="1"/>
</dbReference>
<dbReference type="Gene3D" id="3.30.70.360">
    <property type="match status" value="1"/>
</dbReference>
<dbReference type="Gene3D" id="3.40.630.10">
    <property type="entry name" value="Zn peptidases"/>
    <property type="match status" value="1"/>
</dbReference>
<dbReference type="HAMAP" id="MF_00550">
    <property type="entry name" value="Aminopeptidase_M20"/>
    <property type="match status" value="1"/>
</dbReference>
<dbReference type="InterPro" id="IPR001261">
    <property type="entry name" value="ArgE/DapE_CS"/>
</dbReference>
<dbReference type="InterPro" id="IPR036264">
    <property type="entry name" value="Bact_exopeptidase_dim_dom"/>
</dbReference>
<dbReference type="InterPro" id="IPR002933">
    <property type="entry name" value="Peptidase_M20"/>
</dbReference>
<dbReference type="InterPro" id="IPR011650">
    <property type="entry name" value="Peptidase_M20_dimer"/>
</dbReference>
<dbReference type="InterPro" id="IPR010161">
    <property type="entry name" value="Peptidase_M20B"/>
</dbReference>
<dbReference type="NCBIfam" id="TIGR01882">
    <property type="entry name" value="peptidase-T"/>
    <property type="match status" value="1"/>
</dbReference>
<dbReference type="NCBIfam" id="NF003976">
    <property type="entry name" value="PRK05469.1"/>
    <property type="match status" value="1"/>
</dbReference>
<dbReference type="NCBIfam" id="NF009920">
    <property type="entry name" value="PRK13381.1"/>
    <property type="match status" value="1"/>
</dbReference>
<dbReference type="PANTHER" id="PTHR42994">
    <property type="entry name" value="PEPTIDASE T"/>
    <property type="match status" value="1"/>
</dbReference>
<dbReference type="PANTHER" id="PTHR42994:SF1">
    <property type="entry name" value="PEPTIDASE T"/>
    <property type="match status" value="1"/>
</dbReference>
<dbReference type="Pfam" id="PF07687">
    <property type="entry name" value="M20_dimer"/>
    <property type="match status" value="1"/>
</dbReference>
<dbReference type="Pfam" id="PF01546">
    <property type="entry name" value="Peptidase_M20"/>
    <property type="match status" value="1"/>
</dbReference>
<dbReference type="PIRSF" id="PIRSF037215">
    <property type="entry name" value="Peptidase_M20B"/>
    <property type="match status" value="1"/>
</dbReference>
<dbReference type="SUPFAM" id="SSF55031">
    <property type="entry name" value="Bacterial exopeptidase dimerisation domain"/>
    <property type="match status" value="1"/>
</dbReference>
<dbReference type="SUPFAM" id="SSF53187">
    <property type="entry name" value="Zn-dependent exopeptidases"/>
    <property type="match status" value="1"/>
</dbReference>
<dbReference type="PROSITE" id="PS00758">
    <property type="entry name" value="ARGE_DAPE_CPG2_1"/>
    <property type="match status" value="1"/>
</dbReference>
<dbReference type="PROSITE" id="PS00759">
    <property type="entry name" value="ARGE_DAPE_CPG2_2"/>
    <property type="match status" value="1"/>
</dbReference>
<name>PEPT_STRPI</name>
<comment type="function">
    <text evidence="1">Cleaves the N-terminal amino acid of tripeptides.</text>
</comment>
<comment type="catalytic activity">
    <reaction evidence="1">
        <text>Release of the N-terminal residue from a tripeptide.</text>
        <dbReference type="EC" id="3.4.11.4"/>
    </reaction>
</comment>
<comment type="cofactor">
    <cofactor evidence="1">
        <name>Zn(2+)</name>
        <dbReference type="ChEBI" id="CHEBI:29105"/>
    </cofactor>
    <text evidence="1">Binds 2 Zn(2+) ions per subunit.</text>
</comment>
<comment type="subcellular location">
    <subcellularLocation>
        <location evidence="1">Cytoplasm</location>
    </subcellularLocation>
</comment>
<comment type="similarity">
    <text evidence="1">Belongs to the peptidase M20B family.</text>
</comment>
<gene>
    <name evidence="1" type="primary">pepT</name>
    <name type="ordered locus">SPH_1110</name>
</gene>
<protein>
    <recommendedName>
        <fullName evidence="1">Peptidase T</fullName>
        <ecNumber evidence="1">3.4.11.4</ecNumber>
    </recommendedName>
    <alternativeName>
        <fullName evidence="1">Aminotripeptidase</fullName>
        <shortName evidence="1">Tripeptidase</shortName>
    </alternativeName>
    <alternativeName>
        <fullName evidence="1">Tripeptide aminopeptidase</fullName>
    </alternativeName>
</protein>
<evidence type="ECO:0000255" key="1">
    <source>
        <dbReference type="HAMAP-Rule" id="MF_00550"/>
    </source>
</evidence>
<organism>
    <name type="scientific">Streptococcus pneumoniae (strain Hungary19A-6)</name>
    <dbReference type="NCBI Taxonomy" id="487214"/>
    <lineage>
        <taxon>Bacteria</taxon>
        <taxon>Bacillati</taxon>
        <taxon>Bacillota</taxon>
        <taxon>Bacilli</taxon>
        <taxon>Lactobacillales</taxon>
        <taxon>Streptococcaceae</taxon>
        <taxon>Streptococcus</taxon>
    </lineage>
</organism>
<keyword id="KW-0031">Aminopeptidase</keyword>
<keyword id="KW-0963">Cytoplasm</keyword>
<keyword id="KW-0378">Hydrolase</keyword>
<keyword id="KW-0479">Metal-binding</keyword>
<keyword id="KW-0482">Metalloprotease</keyword>
<keyword id="KW-0645">Protease</keyword>
<keyword id="KW-0862">Zinc</keyword>
<reference key="1">
    <citation type="journal article" date="2010" name="Genome Biol.">
        <title>Structure and dynamics of the pan-genome of Streptococcus pneumoniae and closely related species.</title>
        <authorList>
            <person name="Donati C."/>
            <person name="Hiller N.L."/>
            <person name="Tettelin H."/>
            <person name="Muzzi A."/>
            <person name="Croucher N.J."/>
            <person name="Angiuoli S.V."/>
            <person name="Oggioni M."/>
            <person name="Dunning Hotopp J.C."/>
            <person name="Hu F.Z."/>
            <person name="Riley D.R."/>
            <person name="Covacci A."/>
            <person name="Mitchell T.J."/>
            <person name="Bentley S.D."/>
            <person name="Kilian M."/>
            <person name="Ehrlich G.D."/>
            <person name="Rappuoli R."/>
            <person name="Moxon E.R."/>
            <person name="Masignani V."/>
        </authorList>
    </citation>
    <scope>NUCLEOTIDE SEQUENCE [LARGE SCALE GENOMIC DNA]</scope>
    <source>
        <strain>Hungary19A-6</strain>
    </source>
</reference>
<accession>B1IBG7</accession>
<sequence length="407" mass="44774">MTYPNLLDRFLTYVKVNTRSDEHSTTTPSTQSQVDFATNVLIPEMKRVGLQNVYYLPNGFAIGTLPANDPSLTRKIGFISHMDTADFNAEGVNPQVIENYDGGVIELGNSGFKLDPADFKSLEKYPGQTLITTDGTTLLGADDKSGIAEIMTAIEYLTAHPEIKHCEIRVGFGPDEEIGVGANKFDAEDFDVDFAYTVDGGPLGELQYETFSAAGAELHFQGRNVHPGTAKGQMVNALQLAIDFHNQLPENDRPELTEGYQGFYHLMDVTGSVEEARASYIIRDFEKDAFEARKASMQSIADKMNEELGSNRVTLNLTDQYYNMKEVIEKDMTPITVAKAVMEDLGITPIIEPIRGGTDGSKISFMGIPTPNIFAGGENMHGRFEYVSLQTMERAVDTIIGIVAYKG</sequence>